<name>DDL_LACLM</name>
<organism>
    <name type="scientific">Lactococcus lactis subsp. cremoris (strain MG1363)</name>
    <dbReference type="NCBI Taxonomy" id="416870"/>
    <lineage>
        <taxon>Bacteria</taxon>
        <taxon>Bacillati</taxon>
        <taxon>Bacillota</taxon>
        <taxon>Bacilli</taxon>
        <taxon>Lactobacillales</taxon>
        <taxon>Streptococcaceae</taxon>
        <taxon>Lactococcus</taxon>
        <taxon>Lactococcus cremoris subsp. cremoris</taxon>
    </lineage>
</organism>
<gene>
    <name evidence="2" type="primary">ddl</name>
    <name type="ordered locus">llmg_0360</name>
</gene>
<evidence type="ECO:0000250" key="1"/>
<evidence type="ECO:0000255" key="2">
    <source>
        <dbReference type="HAMAP-Rule" id="MF_00047"/>
    </source>
</evidence>
<sequence>MSKETLILLYGGRSAEREVSVLSAESVMRAVNYSRFIVKTYFITKGGEFIKTQEFTDRPAEEEKLLTNDLAESYPKISPAAIYEKDAVVFPVLHGPMGEDGSIQGFLEILRLAYVGPNILSASSTMDKLLAKHVFEAVGVPQVPYVAAFADENQVEIAQEVVEKLDFPVFVKPANMGSSVGISKVDDLADLQPALSEAYKYDNRVVIEQGVDAREIECAVLGNNSDVSATLPGEVVKDVGFYDYNSKYIDNKIQMDIPAKVSADLAQKIQEYAKKAYKAVNGAGLSRCDFFVTKDGNVYLNEVNAIPGFTQWSMYPLLWENMGLSYSDLIEKLVDLAKETFETRENHLL</sequence>
<reference key="1">
    <citation type="journal article" date="2007" name="J. Bacteriol.">
        <title>The complete genome sequence of the lactic acid bacterial paradigm Lactococcus lactis subsp. cremoris MG1363.</title>
        <authorList>
            <person name="Wegmann U."/>
            <person name="O'Connell-Motherway M."/>
            <person name="Zomer A."/>
            <person name="Buist G."/>
            <person name="Shearman C."/>
            <person name="Canchaya C."/>
            <person name="Ventura M."/>
            <person name="Goesmann A."/>
            <person name="Gasson M.J."/>
            <person name="Kuipers O.P."/>
            <person name="van Sinderen D."/>
            <person name="Kok J."/>
        </authorList>
    </citation>
    <scope>NUCLEOTIDE SEQUENCE [LARGE SCALE GENOMIC DNA]</scope>
    <source>
        <strain>MG1363</strain>
    </source>
</reference>
<proteinExistence type="inferred from homology"/>
<keyword id="KW-0067">ATP-binding</keyword>
<keyword id="KW-0133">Cell shape</keyword>
<keyword id="KW-0961">Cell wall biogenesis/degradation</keyword>
<keyword id="KW-0963">Cytoplasm</keyword>
<keyword id="KW-0436">Ligase</keyword>
<keyword id="KW-0460">Magnesium</keyword>
<keyword id="KW-0464">Manganese</keyword>
<keyword id="KW-0479">Metal-binding</keyword>
<keyword id="KW-0547">Nucleotide-binding</keyword>
<keyword id="KW-0573">Peptidoglycan synthesis</keyword>
<feature type="chain" id="PRO_1000030455" description="D-alanine--D-alanine ligase">
    <location>
        <begin position="1"/>
        <end position="349"/>
    </location>
</feature>
<feature type="domain" description="ATP-grasp" evidence="2">
    <location>
        <begin position="132"/>
        <end position="335"/>
    </location>
</feature>
<feature type="binding site" evidence="2">
    <location>
        <begin position="162"/>
        <end position="217"/>
    </location>
    <ligand>
        <name>ATP</name>
        <dbReference type="ChEBI" id="CHEBI:30616"/>
    </ligand>
</feature>
<feature type="binding site" evidence="2">
    <location>
        <position position="289"/>
    </location>
    <ligand>
        <name>Mg(2+)</name>
        <dbReference type="ChEBI" id="CHEBI:18420"/>
        <label>1</label>
    </ligand>
</feature>
<feature type="binding site" evidence="2">
    <location>
        <position position="302"/>
    </location>
    <ligand>
        <name>Mg(2+)</name>
        <dbReference type="ChEBI" id="CHEBI:18420"/>
        <label>1</label>
    </ligand>
</feature>
<feature type="binding site" evidence="2">
    <location>
        <position position="302"/>
    </location>
    <ligand>
        <name>Mg(2+)</name>
        <dbReference type="ChEBI" id="CHEBI:18420"/>
        <label>2</label>
    </ligand>
</feature>
<feature type="binding site" evidence="2">
    <location>
        <position position="304"/>
    </location>
    <ligand>
        <name>Mg(2+)</name>
        <dbReference type="ChEBI" id="CHEBI:18420"/>
        <label>2</label>
    </ligand>
</feature>
<comment type="function">
    <text evidence="2">Cell wall formation.</text>
</comment>
<comment type="catalytic activity">
    <reaction evidence="2">
        <text>2 D-alanine + ATP = D-alanyl-D-alanine + ADP + phosphate + H(+)</text>
        <dbReference type="Rhea" id="RHEA:11224"/>
        <dbReference type="ChEBI" id="CHEBI:15378"/>
        <dbReference type="ChEBI" id="CHEBI:30616"/>
        <dbReference type="ChEBI" id="CHEBI:43474"/>
        <dbReference type="ChEBI" id="CHEBI:57416"/>
        <dbReference type="ChEBI" id="CHEBI:57822"/>
        <dbReference type="ChEBI" id="CHEBI:456216"/>
        <dbReference type="EC" id="6.3.2.4"/>
    </reaction>
</comment>
<comment type="cofactor">
    <cofactor evidence="1">
        <name>Mg(2+)</name>
        <dbReference type="ChEBI" id="CHEBI:18420"/>
    </cofactor>
    <cofactor evidence="1">
        <name>Mn(2+)</name>
        <dbReference type="ChEBI" id="CHEBI:29035"/>
    </cofactor>
    <text evidence="1">Binds 2 magnesium or manganese ions per subunit.</text>
</comment>
<comment type="pathway">
    <text evidence="2">Cell wall biogenesis; peptidoglycan biosynthesis.</text>
</comment>
<comment type="subcellular location">
    <subcellularLocation>
        <location evidence="2">Cytoplasm</location>
    </subcellularLocation>
</comment>
<comment type="similarity">
    <text evidence="2">Belongs to the D-alanine--D-alanine ligase family.</text>
</comment>
<accession>A2RI72</accession>
<protein>
    <recommendedName>
        <fullName evidence="2">D-alanine--D-alanine ligase</fullName>
        <ecNumber evidence="2">6.3.2.4</ecNumber>
    </recommendedName>
    <alternativeName>
        <fullName evidence="2">D-Ala-D-Ala ligase</fullName>
    </alternativeName>
    <alternativeName>
        <fullName evidence="2">D-alanylalanine synthetase</fullName>
    </alternativeName>
</protein>
<dbReference type="EC" id="6.3.2.4" evidence="2"/>
<dbReference type="EMBL" id="AM406671">
    <property type="protein sequence ID" value="CAL96965.1"/>
    <property type="molecule type" value="Genomic_DNA"/>
</dbReference>
<dbReference type="RefSeq" id="WP_011834418.1">
    <property type="nucleotide sequence ID" value="NC_009004.1"/>
</dbReference>
<dbReference type="SMR" id="A2RI72"/>
<dbReference type="STRING" id="416870.llmg_0360"/>
<dbReference type="KEGG" id="llm:llmg_0360"/>
<dbReference type="eggNOG" id="COG1181">
    <property type="taxonomic scope" value="Bacteria"/>
</dbReference>
<dbReference type="HOGENOM" id="CLU_039268_0_0_9"/>
<dbReference type="OrthoDB" id="9813261at2"/>
<dbReference type="PhylomeDB" id="A2RI72"/>
<dbReference type="UniPathway" id="UPA00219"/>
<dbReference type="Proteomes" id="UP000000364">
    <property type="component" value="Chromosome"/>
</dbReference>
<dbReference type="GO" id="GO:0005829">
    <property type="term" value="C:cytosol"/>
    <property type="evidence" value="ECO:0007669"/>
    <property type="project" value="TreeGrafter"/>
</dbReference>
<dbReference type="GO" id="GO:0005524">
    <property type="term" value="F:ATP binding"/>
    <property type="evidence" value="ECO:0007669"/>
    <property type="project" value="UniProtKB-KW"/>
</dbReference>
<dbReference type="GO" id="GO:0008716">
    <property type="term" value="F:D-alanine-D-alanine ligase activity"/>
    <property type="evidence" value="ECO:0007669"/>
    <property type="project" value="UniProtKB-UniRule"/>
</dbReference>
<dbReference type="GO" id="GO:0046872">
    <property type="term" value="F:metal ion binding"/>
    <property type="evidence" value="ECO:0007669"/>
    <property type="project" value="UniProtKB-KW"/>
</dbReference>
<dbReference type="GO" id="GO:0071555">
    <property type="term" value="P:cell wall organization"/>
    <property type="evidence" value="ECO:0007669"/>
    <property type="project" value="UniProtKB-KW"/>
</dbReference>
<dbReference type="GO" id="GO:0009252">
    <property type="term" value="P:peptidoglycan biosynthetic process"/>
    <property type="evidence" value="ECO:0007669"/>
    <property type="project" value="UniProtKB-UniRule"/>
</dbReference>
<dbReference type="GO" id="GO:0008360">
    <property type="term" value="P:regulation of cell shape"/>
    <property type="evidence" value="ECO:0007669"/>
    <property type="project" value="UniProtKB-KW"/>
</dbReference>
<dbReference type="FunFam" id="3.30.1490.20:FF:000007">
    <property type="entry name" value="D-alanine--D-alanine ligase"/>
    <property type="match status" value="1"/>
</dbReference>
<dbReference type="FunFam" id="3.30.470.20:FF:000008">
    <property type="entry name" value="D-alanine--D-alanine ligase"/>
    <property type="match status" value="1"/>
</dbReference>
<dbReference type="Gene3D" id="3.40.50.20">
    <property type="match status" value="1"/>
</dbReference>
<dbReference type="Gene3D" id="3.30.1490.20">
    <property type="entry name" value="ATP-grasp fold, A domain"/>
    <property type="match status" value="1"/>
</dbReference>
<dbReference type="Gene3D" id="3.30.470.20">
    <property type="entry name" value="ATP-grasp fold, B domain"/>
    <property type="match status" value="1"/>
</dbReference>
<dbReference type="HAMAP" id="MF_00047">
    <property type="entry name" value="Dala_Dala_lig"/>
    <property type="match status" value="1"/>
</dbReference>
<dbReference type="InterPro" id="IPR011761">
    <property type="entry name" value="ATP-grasp"/>
</dbReference>
<dbReference type="InterPro" id="IPR013815">
    <property type="entry name" value="ATP_grasp_subdomain_1"/>
</dbReference>
<dbReference type="InterPro" id="IPR000291">
    <property type="entry name" value="D-Ala_lig_Van_CS"/>
</dbReference>
<dbReference type="InterPro" id="IPR005905">
    <property type="entry name" value="D_ala_D_ala"/>
</dbReference>
<dbReference type="InterPro" id="IPR011095">
    <property type="entry name" value="Dala_Dala_lig_C"/>
</dbReference>
<dbReference type="InterPro" id="IPR011127">
    <property type="entry name" value="Dala_Dala_lig_N"/>
</dbReference>
<dbReference type="InterPro" id="IPR016185">
    <property type="entry name" value="PreATP-grasp_dom_sf"/>
</dbReference>
<dbReference type="NCBIfam" id="TIGR01205">
    <property type="entry name" value="D_ala_D_alaTIGR"/>
    <property type="match status" value="1"/>
</dbReference>
<dbReference type="NCBIfam" id="NF002528">
    <property type="entry name" value="PRK01966.1-4"/>
    <property type="match status" value="1"/>
</dbReference>
<dbReference type="NCBIfam" id="NF002529">
    <property type="entry name" value="PRK01966.1-5"/>
    <property type="match status" value="1"/>
</dbReference>
<dbReference type="PANTHER" id="PTHR23132">
    <property type="entry name" value="D-ALANINE--D-ALANINE LIGASE"/>
    <property type="match status" value="1"/>
</dbReference>
<dbReference type="PANTHER" id="PTHR23132:SF25">
    <property type="entry name" value="D-ALANINE--D-ALANINE LIGASE A"/>
    <property type="match status" value="1"/>
</dbReference>
<dbReference type="Pfam" id="PF07478">
    <property type="entry name" value="Dala_Dala_lig_C"/>
    <property type="match status" value="1"/>
</dbReference>
<dbReference type="Pfam" id="PF01820">
    <property type="entry name" value="Dala_Dala_lig_N"/>
    <property type="match status" value="1"/>
</dbReference>
<dbReference type="PIRSF" id="PIRSF039102">
    <property type="entry name" value="Ddl/VanB"/>
    <property type="match status" value="1"/>
</dbReference>
<dbReference type="SUPFAM" id="SSF56059">
    <property type="entry name" value="Glutathione synthetase ATP-binding domain-like"/>
    <property type="match status" value="1"/>
</dbReference>
<dbReference type="SUPFAM" id="SSF52440">
    <property type="entry name" value="PreATP-grasp domain"/>
    <property type="match status" value="1"/>
</dbReference>
<dbReference type="PROSITE" id="PS50975">
    <property type="entry name" value="ATP_GRASP"/>
    <property type="match status" value="1"/>
</dbReference>
<dbReference type="PROSITE" id="PS00843">
    <property type="entry name" value="DALA_DALA_LIGASE_1"/>
    <property type="match status" value="1"/>
</dbReference>
<dbReference type="PROSITE" id="PS00844">
    <property type="entry name" value="DALA_DALA_LIGASE_2"/>
    <property type="match status" value="1"/>
</dbReference>